<dbReference type="EC" id="6.3.2.8" evidence="1"/>
<dbReference type="EMBL" id="CP001344">
    <property type="protein sequence ID" value="ACL43283.1"/>
    <property type="molecule type" value="Genomic_DNA"/>
</dbReference>
<dbReference type="SMR" id="B8HWY0"/>
<dbReference type="STRING" id="395961.Cyan7425_0897"/>
<dbReference type="KEGG" id="cyn:Cyan7425_0897"/>
<dbReference type="eggNOG" id="COG0773">
    <property type="taxonomic scope" value="Bacteria"/>
</dbReference>
<dbReference type="HOGENOM" id="CLU_028104_2_2_3"/>
<dbReference type="OrthoDB" id="9804126at2"/>
<dbReference type="UniPathway" id="UPA00219"/>
<dbReference type="GO" id="GO:0005737">
    <property type="term" value="C:cytoplasm"/>
    <property type="evidence" value="ECO:0007669"/>
    <property type="project" value="UniProtKB-SubCell"/>
</dbReference>
<dbReference type="GO" id="GO:0005524">
    <property type="term" value="F:ATP binding"/>
    <property type="evidence" value="ECO:0007669"/>
    <property type="project" value="UniProtKB-UniRule"/>
</dbReference>
<dbReference type="GO" id="GO:0008763">
    <property type="term" value="F:UDP-N-acetylmuramate-L-alanine ligase activity"/>
    <property type="evidence" value="ECO:0007669"/>
    <property type="project" value="UniProtKB-UniRule"/>
</dbReference>
<dbReference type="GO" id="GO:0051301">
    <property type="term" value="P:cell division"/>
    <property type="evidence" value="ECO:0007669"/>
    <property type="project" value="UniProtKB-KW"/>
</dbReference>
<dbReference type="GO" id="GO:0071555">
    <property type="term" value="P:cell wall organization"/>
    <property type="evidence" value="ECO:0007669"/>
    <property type="project" value="UniProtKB-KW"/>
</dbReference>
<dbReference type="GO" id="GO:0009252">
    <property type="term" value="P:peptidoglycan biosynthetic process"/>
    <property type="evidence" value="ECO:0007669"/>
    <property type="project" value="UniProtKB-UniRule"/>
</dbReference>
<dbReference type="GO" id="GO:0008360">
    <property type="term" value="P:regulation of cell shape"/>
    <property type="evidence" value="ECO:0007669"/>
    <property type="project" value="UniProtKB-KW"/>
</dbReference>
<dbReference type="Gene3D" id="3.90.190.20">
    <property type="entry name" value="Mur ligase, C-terminal domain"/>
    <property type="match status" value="1"/>
</dbReference>
<dbReference type="Gene3D" id="3.40.1190.10">
    <property type="entry name" value="Mur-like, catalytic domain"/>
    <property type="match status" value="1"/>
</dbReference>
<dbReference type="Gene3D" id="3.40.50.720">
    <property type="entry name" value="NAD(P)-binding Rossmann-like Domain"/>
    <property type="match status" value="1"/>
</dbReference>
<dbReference type="HAMAP" id="MF_00046">
    <property type="entry name" value="MurC"/>
    <property type="match status" value="1"/>
</dbReference>
<dbReference type="InterPro" id="IPR036565">
    <property type="entry name" value="Mur-like_cat_sf"/>
</dbReference>
<dbReference type="InterPro" id="IPR004101">
    <property type="entry name" value="Mur_ligase_C"/>
</dbReference>
<dbReference type="InterPro" id="IPR036615">
    <property type="entry name" value="Mur_ligase_C_dom_sf"/>
</dbReference>
<dbReference type="InterPro" id="IPR013221">
    <property type="entry name" value="Mur_ligase_cen"/>
</dbReference>
<dbReference type="InterPro" id="IPR000713">
    <property type="entry name" value="Mur_ligase_N"/>
</dbReference>
<dbReference type="InterPro" id="IPR050061">
    <property type="entry name" value="MurCDEF_pg_biosynth"/>
</dbReference>
<dbReference type="InterPro" id="IPR005758">
    <property type="entry name" value="UDP-N-AcMur_Ala_ligase_MurC"/>
</dbReference>
<dbReference type="NCBIfam" id="TIGR01082">
    <property type="entry name" value="murC"/>
    <property type="match status" value="1"/>
</dbReference>
<dbReference type="PANTHER" id="PTHR43445:SF3">
    <property type="entry name" value="UDP-N-ACETYLMURAMATE--L-ALANINE LIGASE"/>
    <property type="match status" value="1"/>
</dbReference>
<dbReference type="PANTHER" id="PTHR43445">
    <property type="entry name" value="UDP-N-ACETYLMURAMATE--L-ALANINE LIGASE-RELATED"/>
    <property type="match status" value="1"/>
</dbReference>
<dbReference type="Pfam" id="PF01225">
    <property type="entry name" value="Mur_ligase"/>
    <property type="match status" value="1"/>
</dbReference>
<dbReference type="Pfam" id="PF02875">
    <property type="entry name" value="Mur_ligase_C"/>
    <property type="match status" value="1"/>
</dbReference>
<dbReference type="Pfam" id="PF08245">
    <property type="entry name" value="Mur_ligase_M"/>
    <property type="match status" value="1"/>
</dbReference>
<dbReference type="SUPFAM" id="SSF51984">
    <property type="entry name" value="MurCD N-terminal domain"/>
    <property type="match status" value="1"/>
</dbReference>
<dbReference type="SUPFAM" id="SSF53623">
    <property type="entry name" value="MurD-like peptide ligases, catalytic domain"/>
    <property type="match status" value="1"/>
</dbReference>
<dbReference type="SUPFAM" id="SSF53244">
    <property type="entry name" value="MurD-like peptide ligases, peptide-binding domain"/>
    <property type="match status" value="1"/>
</dbReference>
<gene>
    <name evidence="1" type="primary">murC</name>
    <name type="ordered locus">Cyan7425_0897</name>
</gene>
<proteinExistence type="inferred from homology"/>
<comment type="function">
    <text evidence="1">Cell wall formation.</text>
</comment>
<comment type="catalytic activity">
    <reaction evidence="1">
        <text>UDP-N-acetyl-alpha-D-muramate + L-alanine + ATP = UDP-N-acetyl-alpha-D-muramoyl-L-alanine + ADP + phosphate + H(+)</text>
        <dbReference type="Rhea" id="RHEA:23372"/>
        <dbReference type="ChEBI" id="CHEBI:15378"/>
        <dbReference type="ChEBI" id="CHEBI:30616"/>
        <dbReference type="ChEBI" id="CHEBI:43474"/>
        <dbReference type="ChEBI" id="CHEBI:57972"/>
        <dbReference type="ChEBI" id="CHEBI:70757"/>
        <dbReference type="ChEBI" id="CHEBI:83898"/>
        <dbReference type="ChEBI" id="CHEBI:456216"/>
        <dbReference type="EC" id="6.3.2.8"/>
    </reaction>
</comment>
<comment type="pathway">
    <text evidence="1">Cell wall biogenesis; peptidoglycan biosynthesis.</text>
</comment>
<comment type="subcellular location">
    <subcellularLocation>
        <location evidence="1">Cytoplasm</location>
    </subcellularLocation>
</comment>
<comment type="similarity">
    <text evidence="1">Belongs to the MurCDEF family.</text>
</comment>
<evidence type="ECO:0000255" key="1">
    <source>
        <dbReference type="HAMAP-Rule" id="MF_00046"/>
    </source>
</evidence>
<organism>
    <name type="scientific">Cyanothece sp. (strain PCC 7425 / ATCC 29141)</name>
    <dbReference type="NCBI Taxonomy" id="395961"/>
    <lineage>
        <taxon>Bacteria</taxon>
        <taxon>Bacillati</taxon>
        <taxon>Cyanobacteriota</taxon>
        <taxon>Cyanophyceae</taxon>
        <taxon>Gomontiellales</taxon>
        <taxon>Cyanothecaceae</taxon>
        <taxon>Cyanothece</taxon>
    </lineage>
</organism>
<feature type="chain" id="PRO_1000192091" description="UDP-N-acetylmuramate--L-alanine ligase">
    <location>
        <begin position="1"/>
        <end position="482"/>
    </location>
</feature>
<feature type="binding site" evidence="1">
    <location>
        <begin position="119"/>
        <end position="125"/>
    </location>
    <ligand>
        <name>ATP</name>
        <dbReference type="ChEBI" id="CHEBI:30616"/>
    </ligand>
</feature>
<keyword id="KW-0067">ATP-binding</keyword>
<keyword id="KW-0131">Cell cycle</keyword>
<keyword id="KW-0132">Cell division</keyword>
<keyword id="KW-0133">Cell shape</keyword>
<keyword id="KW-0961">Cell wall biogenesis/degradation</keyword>
<keyword id="KW-0963">Cytoplasm</keyword>
<keyword id="KW-0436">Ligase</keyword>
<keyword id="KW-0547">Nucleotide-binding</keyword>
<keyword id="KW-0573">Peptidoglycan synthesis</keyword>
<reference key="1">
    <citation type="journal article" date="2011" name="MBio">
        <title>Novel metabolic attributes of the genus Cyanothece, comprising a group of unicellular nitrogen-fixing Cyanobacteria.</title>
        <authorList>
            <person name="Bandyopadhyay A."/>
            <person name="Elvitigala T."/>
            <person name="Welsh E."/>
            <person name="Stockel J."/>
            <person name="Liberton M."/>
            <person name="Min H."/>
            <person name="Sherman L.A."/>
            <person name="Pakrasi H.B."/>
        </authorList>
    </citation>
    <scope>NUCLEOTIDE SEQUENCE [LARGE SCALE GENOMIC DNA]</scope>
    <source>
        <strain>PCC 7425 / ATCC 29141</strain>
    </source>
</reference>
<protein>
    <recommendedName>
        <fullName evidence="1">UDP-N-acetylmuramate--L-alanine ligase</fullName>
        <ecNumber evidence="1">6.3.2.8</ecNumber>
    </recommendedName>
    <alternativeName>
        <fullName evidence="1">UDP-N-acetylmuramoyl-L-alanine synthetase</fullName>
    </alternativeName>
</protein>
<name>MURC_CYAP4</name>
<accession>B8HWY0</accession>
<sequence length="482" mass="53186">MLNRVDFGGRPFHFIGIGGIGMSALAHVLVKHKLPVSGSDARLNPITEQLQHLGVRIFPQQEATNLLALPQLPQVVCSTAIHADNPEYKMAVELGCPILHRSDLLAALIERYQSIAVAGTHGKTTTSSMIGYLLLQGGVDPTIIIGGEVQAWEGNARTGMGEYLVAEADESDGSLAKFAPQIGVITNIELDHPDHYSNLEQVIKIFETFANHCQTVVACWDCPTIRDRLTVLPDQSVVSYSLFRESGADYSVDQISYGPQGTLAQVWERGELLGELSTKLLGAHNLKNALAAVAVGRLLGLDFITISRGIARFEGARRRFEVRGEAHGIRFVDDYAHHPSEIRATLAAGRLQLKSREEFISPWQRLVAVFQPHRYTRTFTFLTEFSQAFGDADLVVLTDIYSAGERDRLVQGQHLADCMAEYHAQVQYQPSLEEVKLFLKQTLRPGDLVLVLGAGNLNQIIPELLDYYQTLPIETISEVVPL</sequence>